<sequence>MAASGPAAAAPSGVLVTCGLEQVLEALKLLLSPGGSGSSSLQNTKHDVLLQTLKSNLSALEAKFLKDAQWKKLKALRDELADKAEWPQSSEDITWSFTSQTLLLLLCLKEVLARLVADFNPGKPNPRTPEAAPALSPDTLSVSQQKTFQSVLQFVVTLGVCPYLIPGVGVPLRDRTEFGAVVQDVVRLEAAPHATRRLYICCRVLLDLAQHASLGSLIFCRHFGDIAAGLCQLGFCPTKRKPPGPVEEVLTEEERTLSRRALRDILDQVYQPLAVRELLTLQGGPRQPCTDVKTQLRCRAQAPAWLRRLCGQLLSERLMRPNGVQAVVRGILEGAGAGAAGGSDAEATAADWRKCDLIAKILASCPQQSLSPESYYKDICPQILDLFHLQDKLTARQFQRVATTTFITLSRERPELAAKYLLQPMLAPLQRCLSTAEIPESDMVPGAILVTEEELSRCVEDVFKVYVVANEPVPVLLDSLLPLLRVFFSLYCFTQQSVSHIRSLCQEILLWILVKLERKKAIASLKGFSGLDKTVPTLHPQCQFRAATHGGIVITAKEAISDDEDEALYQKVSSEQSQVEHLGDLLLHCQQCGLAGDFFIFCLKELSHLLEDREAEFTPKPSCYASLLELEHHQTLLIEDQERKLQVLQLLAVLCEKMSEQIFTHVTQVVDFVAATLQRACAGLAHEAESAVGSQTLSMSMGLVAVMLGGAVQLKSSDFAVLKQLLPLLERVSNTYPDPVIQELAADLRITISTHGAFSTDAVSTAAQSTLNQKDPGQKIEEQRQTSPDISTEGAQKPPRTGQGSSGPCTATSQPPGSITTQQFREVLLSACDPEVPTRAAALRTLARWVEQREARALEEQKKLLQIFLENLEHEDSFVYLSAIQGIALLSDVYPEEILVDLLAKYDSGKDKHTPETRMKVGEVLMRVVRALGDMVSKYREPLIHTFLRGVRDPDAAHRASSLANLGELCQCLHFLLGPVVHEVTACLIAVAKTDNDVQVRRAAVHVVVLLLRGLSQKATEVLSDVLRDLYHLLKHVVRLEPDDVAKLHAQLALEELDEIMRNFLFPPQKLEKKIVVLP</sequence>
<evidence type="ECO:0000255" key="1"/>
<evidence type="ECO:0000256" key="2">
    <source>
        <dbReference type="SAM" id="MobiDB-lite"/>
    </source>
</evidence>
<evidence type="ECO:0000303" key="3">
    <source>
    </source>
</evidence>
<evidence type="ECO:0000303" key="4">
    <source>
    </source>
</evidence>
<evidence type="ECO:0000305" key="5"/>
<evidence type="ECO:0007744" key="6">
    <source>
    </source>
</evidence>
<organism>
    <name type="scientific">Mus musculus</name>
    <name type="common">Mouse</name>
    <dbReference type="NCBI Taxonomy" id="10090"/>
    <lineage>
        <taxon>Eukaryota</taxon>
        <taxon>Metazoa</taxon>
        <taxon>Chordata</taxon>
        <taxon>Craniata</taxon>
        <taxon>Vertebrata</taxon>
        <taxon>Euteleostomi</taxon>
        <taxon>Mammalia</taxon>
        <taxon>Eutheria</taxon>
        <taxon>Euarchontoglires</taxon>
        <taxon>Glires</taxon>
        <taxon>Rodentia</taxon>
        <taxon>Myomorpha</taxon>
        <taxon>Muroidea</taxon>
        <taxon>Muridae</taxon>
        <taxon>Murinae</taxon>
        <taxon>Mus</taxon>
        <taxon>Mus</taxon>
    </lineage>
</organism>
<dbReference type="EMBL" id="AK047206">
    <property type="protein sequence ID" value="BAC32990.1"/>
    <property type="molecule type" value="mRNA"/>
</dbReference>
<dbReference type="EMBL" id="AK054283">
    <property type="protein sequence ID" value="BAC35717.1"/>
    <property type="molecule type" value="mRNA"/>
</dbReference>
<dbReference type="EMBL" id="AK085030">
    <property type="protein sequence ID" value="BAC39344.1"/>
    <property type="molecule type" value="mRNA"/>
</dbReference>
<dbReference type="EMBL" id="BC066869">
    <property type="protein sequence ID" value="AAH66869.1"/>
    <property type="molecule type" value="mRNA"/>
</dbReference>
<dbReference type="EMBL" id="BC069838">
    <property type="protein sequence ID" value="AAH69838.1"/>
    <property type="molecule type" value="mRNA"/>
</dbReference>
<dbReference type="EMBL" id="AK173250">
    <property type="protein sequence ID" value="BAD32528.1"/>
    <property type="molecule type" value="mRNA"/>
</dbReference>
<dbReference type="CCDS" id="CCDS22639.1">
    <molecule id="Q8C3S2-1"/>
</dbReference>
<dbReference type="RefSeq" id="NP_766625.1">
    <molecule id="Q8C3S2-1"/>
    <property type="nucleotide sequence ID" value="NM_173037.2"/>
</dbReference>
<dbReference type="SMR" id="Q8C3S2"/>
<dbReference type="BioGRID" id="234875">
    <property type="interactions" value="1"/>
</dbReference>
<dbReference type="FunCoup" id="Q8C3S2">
    <property type="interactions" value="147"/>
</dbReference>
<dbReference type="STRING" id="10090.ENSMUSP00000043953"/>
<dbReference type="iPTMnet" id="Q8C3S2"/>
<dbReference type="PhosphoSitePlus" id="Q8C3S2"/>
<dbReference type="PaxDb" id="10090-ENSMUSP00000043953"/>
<dbReference type="PeptideAtlas" id="Q8C3S2"/>
<dbReference type="ProteomicsDB" id="259274">
    <molecule id="Q8C3S2-1"/>
</dbReference>
<dbReference type="ProteomicsDB" id="259275">
    <molecule id="Q8C3S2-2"/>
</dbReference>
<dbReference type="ProteomicsDB" id="259276">
    <molecule id="Q8C3S2-3"/>
</dbReference>
<dbReference type="Pumba" id="Q8C3S2"/>
<dbReference type="Antibodypedia" id="50648">
    <property type="antibodies" value="62 antibodies from 14 providers"/>
</dbReference>
<dbReference type="DNASU" id="272538"/>
<dbReference type="Ensembl" id="ENSMUST00000048359.5">
    <molecule id="Q8C3S2-1"/>
    <property type="protein sequence ID" value="ENSMUSP00000043953.5"/>
    <property type="gene ID" value="ENSMUSG00000041949.7"/>
</dbReference>
<dbReference type="GeneID" id="272538"/>
<dbReference type="KEGG" id="mmu:272538"/>
<dbReference type="UCSC" id="uc009ngk.1">
    <molecule id="Q8C3S2-2"/>
    <property type="organism name" value="mouse"/>
</dbReference>
<dbReference type="UCSC" id="uc009ngl.1">
    <molecule id="Q8C3S2-1"/>
    <property type="organism name" value="mouse"/>
</dbReference>
<dbReference type="UCSC" id="uc012gjv.1">
    <molecule id="Q8C3S2-3"/>
    <property type="organism name" value="mouse"/>
</dbReference>
<dbReference type="AGR" id="MGI:2142786"/>
<dbReference type="CTD" id="79613"/>
<dbReference type="MGI" id="MGI:2142786">
    <property type="gene designation" value="Tango6"/>
</dbReference>
<dbReference type="VEuPathDB" id="HostDB:ENSMUSG00000041949"/>
<dbReference type="eggNOG" id="KOG4653">
    <property type="taxonomic scope" value="Eukaryota"/>
</dbReference>
<dbReference type="GeneTree" id="ENSGT00390000010938"/>
<dbReference type="HOGENOM" id="CLU_006971_1_0_1"/>
<dbReference type="InParanoid" id="Q8C3S2"/>
<dbReference type="OMA" id="QVATLIC"/>
<dbReference type="OrthoDB" id="39591at2759"/>
<dbReference type="PhylomeDB" id="Q8C3S2"/>
<dbReference type="TreeFam" id="TF330876"/>
<dbReference type="BioGRID-ORCS" id="272538">
    <property type="hits" value="22 hits in 78 CRISPR screens"/>
</dbReference>
<dbReference type="ChiTaRS" id="Tango6">
    <property type="organism name" value="mouse"/>
</dbReference>
<dbReference type="PRO" id="PR:Q8C3S2"/>
<dbReference type="Proteomes" id="UP000000589">
    <property type="component" value="Chromosome 8"/>
</dbReference>
<dbReference type="RNAct" id="Q8C3S2">
    <property type="molecule type" value="protein"/>
</dbReference>
<dbReference type="Bgee" id="ENSMUSG00000041949">
    <property type="expression patterns" value="Expressed in ear vesicle and 151 other cell types or tissues"/>
</dbReference>
<dbReference type="ExpressionAtlas" id="Q8C3S2">
    <property type="expression patterns" value="baseline and differential"/>
</dbReference>
<dbReference type="GO" id="GO:0016020">
    <property type="term" value="C:membrane"/>
    <property type="evidence" value="ECO:0007669"/>
    <property type="project" value="UniProtKB-SubCell"/>
</dbReference>
<dbReference type="FunFam" id="1.25.10.10:FF:000704">
    <property type="entry name" value="Transport and golgi organization 6 homolog (Drosophila)"/>
    <property type="match status" value="1"/>
</dbReference>
<dbReference type="Gene3D" id="1.25.10.10">
    <property type="entry name" value="Leucine-rich Repeat Variant"/>
    <property type="match status" value="1"/>
</dbReference>
<dbReference type="InterPro" id="IPR011989">
    <property type="entry name" value="ARM-like"/>
</dbReference>
<dbReference type="InterPro" id="IPR016024">
    <property type="entry name" value="ARM-type_fold"/>
</dbReference>
<dbReference type="InterPro" id="IPR019451">
    <property type="entry name" value="Rtp1_C1"/>
</dbReference>
<dbReference type="InterPro" id="IPR019414">
    <property type="entry name" value="Rtp1_C2"/>
</dbReference>
<dbReference type="InterPro" id="IPR039600">
    <property type="entry name" value="TANGO6/Rtp1"/>
</dbReference>
<dbReference type="PANTHER" id="PTHR20959">
    <property type="entry name" value="TRANSPORT AND GOLGI ORGANIZATION PROTEIN 6 FAMILY MEMBER"/>
    <property type="match status" value="1"/>
</dbReference>
<dbReference type="PANTHER" id="PTHR20959:SF1">
    <property type="entry name" value="TRANSPORT AND GOLGI ORGANIZATION PROTEIN 6 HOMOLOG"/>
    <property type="match status" value="1"/>
</dbReference>
<dbReference type="Pfam" id="PF23565">
    <property type="entry name" value="ARM_TANGO6"/>
    <property type="match status" value="1"/>
</dbReference>
<dbReference type="Pfam" id="PF10363">
    <property type="entry name" value="RTP1_C1"/>
    <property type="match status" value="1"/>
</dbReference>
<dbReference type="Pfam" id="PF10304">
    <property type="entry name" value="RTP1_C2"/>
    <property type="match status" value="1"/>
</dbReference>
<dbReference type="Pfam" id="PF25267">
    <property type="entry name" value="TANGO6_N"/>
    <property type="match status" value="1"/>
</dbReference>
<dbReference type="SUPFAM" id="SSF48371">
    <property type="entry name" value="ARM repeat"/>
    <property type="match status" value="1"/>
</dbReference>
<reference key="1">
    <citation type="journal article" date="2005" name="Science">
        <title>The transcriptional landscape of the mammalian genome.</title>
        <authorList>
            <person name="Carninci P."/>
            <person name="Kasukawa T."/>
            <person name="Katayama S."/>
            <person name="Gough J."/>
            <person name="Frith M.C."/>
            <person name="Maeda N."/>
            <person name="Oyama R."/>
            <person name="Ravasi T."/>
            <person name="Lenhard B."/>
            <person name="Wells C."/>
            <person name="Kodzius R."/>
            <person name="Shimokawa K."/>
            <person name="Bajic V.B."/>
            <person name="Brenner S.E."/>
            <person name="Batalov S."/>
            <person name="Forrest A.R."/>
            <person name="Zavolan M."/>
            <person name="Davis M.J."/>
            <person name="Wilming L.G."/>
            <person name="Aidinis V."/>
            <person name="Allen J.E."/>
            <person name="Ambesi-Impiombato A."/>
            <person name="Apweiler R."/>
            <person name="Aturaliya R.N."/>
            <person name="Bailey T.L."/>
            <person name="Bansal M."/>
            <person name="Baxter L."/>
            <person name="Beisel K.W."/>
            <person name="Bersano T."/>
            <person name="Bono H."/>
            <person name="Chalk A.M."/>
            <person name="Chiu K.P."/>
            <person name="Choudhary V."/>
            <person name="Christoffels A."/>
            <person name="Clutterbuck D.R."/>
            <person name="Crowe M.L."/>
            <person name="Dalla E."/>
            <person name="Dalrymple B.P."/>
            <person name="de Bono B."/>
            <person name="Della Gatta G."/>
            <person name="di Bernardo D."/>
            <person name="Down T."/>
            <person name="Engstrom P."/>
            <person name="Fagiolini M."/>
            <person name="Faulkner G."/>
            <person name="Fletcher C.F."/>
            <person name="Fukushima T."/>
            <person name="Furuno M."/>
            <person name="Futaki S."/>
            <person name="Gariboldi M."/>
            <person name="Georgii-Hemming P."/>
            <person name="Gingeras T.R."/>
            <person name="Gojobori T."/>
            <person name="Green R.E."/>
            <person name="Gustincich S."/>
            <person name="Harbers M."/>
            <person name="Hayashi Y."/>
            <person name="Hensch T.K."/>
            <person name="Hirokawa N."/>
            <person name="Hill D."/>
            <person name="Huminiecki L."/>
            <person name="Iacono M."/>
            <person name="Ikeo K."/>
            <person name="Iwama A."/>
            <person name="Ishikawa T."/>
            <person name="Jakt M."/>
            <person name="Kanapin A."/>
            <person name="Katoh M."/>
            <person name="Kawasawa Y."/>
            <person name="Kelso J."/>
            <person name="Kitamura H."/>
            <person name="Kitano H."/>
            <person name="Kollias G."/>
            <person name="Krishnan S.P."/>
            <person name="Kruger A."/>
            <person name="Kummerfeld S.K."/>
            <person name="Kurochkin I.V."/>
            <person name="Lareau L.F."/>
            <person name="Lazarevic D."/>
            <person name="Lipovich L."/>
            <person name="Liu J."/>
            <person name="Liuni S."/>
            <person name="McWilliam S."/>
            <person name="Madan Babu M."/>
            <person name="Madera M."/>
            <person name="Marchionni L."/>
            <person name="Matsuda H."/>
            <person name="Matsuzawa S."/>
            <person name="Miki H."/>
            <person name="Mignone F."/>
            <person name="Miyake S."/>
            <person name="Morris K."/>
            <person name="Mottagui-Tabar S."/>
            <person name="Mulder N."/>
            <person name="Nakano N."/>
            <person name="Nakauchi H."/>
            <person name="Ng P."/>
            <person name="Nilsson R."/>
            <person name="Nishiguchi S."/>
            <person name="Nishikawa S."/>
            <person name="Nori F."/>
            <person name="Ohara O."/>
            <person name="Okazaki Y."/>
            <person name="Orlando V."/>
            <person name="Pang K.C."/>
            <person name="Pavan W.J."/>
            <person name="Pavesi G."/>
            <person name="Pesole G."/>
            <person name="Petrovsky N."/>
            <person name="Piazza S."/>
            <person name="Reed J."/>
            <person name="Reid J.F."/>
            <person name="Ring B.Z."/>
            <person name="Ringwald M."/>
            <person name="Rost B."/>
            <person name="Ruan Y."/>
            <person name="Salzberg S.L."/>
            <person name="Sandelin A."/>
            <person name="Schneider C."/>
            <person name="Schoenbach C."/>
            <person name="Sekiguchi K."/>
            <person name="Semple C.A."/>
            <person name="Seno S."/>
            <person name="Sessa L."/>
            <person name="Sheng Y."/>
            <person name="Shibata Y."/>
            <person name="Shimada H."/>
            <person name="Shimada K."/>
            <person name="Silva D."/>
            <person name="Sinclair B."/>
            <person name="Sperling S."/>
            <person name="Stupka E."/>
            <person name="Sugiura K."/>
            <person name="Sultana R."/>
            <person name="Takenaka Y."/>
            <person name="Taki K."/>
            <person name="Tammoja K."/>
            <person name="Tan S.L."/>
            <person name="Tang S."/>
            <person name="Taylor M.S."/>
            <person name="Tegner J."/>
            <person name="Teichmann S.A."/>
            <person name="Ueda H.R."/>
            <person name="van Nimwegen E."/>
            <person name="Verardo R."/>
            <person name="Wei C.L."/>
            <person name="Yagi K."/>
            <person name="Yamanishi H."/>
            <person name="Zabarovsky E."/>
            <person name="Zhu S."/>
            <person name="Zimmer A."/>
            <person name="Hide W."/>
            <person name="Bult C."/>
            <person name="Grimmond S.M."/>
            <person name="Teasdale R.D."/>
            <person name="Liu E.T."/>
            <person name="Brusic V."/>
            <person name="Quackenbush J."/>
            <person name="Wahlestedt C."/>
            <person name="Mattick J.S."/>
            <person name="Hume D.A."/>
            <person name="Kai C."/>
            <person name="Sasaki D."/>
            <person name="Tomaru Y."/>
            <person name="Fukuda S."/>
            <person name="Kanamori-Katayama M."/>
            <person name="Suzuki M."/>
            <person name="Aoki J."/>
            <person name="Arakawa T."/>
            <person name="Iida J."/>
            <person name="Imamura K."/>
            <person name="Itoh M."/>
            <person name="Kato T."/>
            <person name="Kawaji H."/>
            <person name="Kawagashira N."/>
            <person name="Kawashima T."/>
            <person name="Kojima M."/>
            <person name="Kondo S."/>
            <person name="Konno H."/>
            <person name="Nakano K."/>
            <person name="Ninomiya N."/>
            <person name="Nishio T."/>
            <person name="Okada M."/>
            <person name="Plessy C."/>
            <person name="Shibata K."/>
            <person name="Shiraki T."/>
            <person name="Suzuki S."/>
            <person name="Tagami M."/>
            <person name="Waki K."/>
            <person name="Watahiki A."/>
            <person name="Okamura-Oho Y."/>
            <person name="Suzuki H."/>
            <person name="Kawai J."/>
            <person name="Hayashizaki Y."/>
        </authorList>
    </citation>
    <scope>NUCLEOTIDE SEQUENCE [LARGE SCALE MRNA] (ISOFORMS 1 AND 2)</scope>
    <source>
        <strain>C57BL/6J</strain>
        <tissue>Cerebellum</tissue>
        <tissue>Lung</tissue>
        <tissue>Ovary</tissue>
    </source>
</reference>
<reference key="2">
    <citation type="journal article" date="2004" name="Genome Res.">
        <title>The status, quality, and expansion of the NIH full-length cDNA project: the Mammalian Gene Collection (MGC).</title>
        <authorList>
            <consortium name="The MGC Project Team"/>
        </authorList>
    </citation>
    <scope>NUCLEOTIDE SEQUENCE [LARGE SCALE MRNA] (ISOFORM 1)</scope>
    <source>
        <strain>C57BL/6J</strain>
        <tissue>Embryonic germ cell</tissue>
    </source>
</reference>
<reference key="3">
    <citation type="journal article" date="2004" name="DNA Res.">
        <title>Prediction of the coding sequences of mouse homologues of KIAA gene: IV. The complete nucleotide sequences of 500 mouse KIAA-homologous cDNAs identified by screening of terminal sequences of cDNA clones randomly sampled from size-fractionated libraries.</title>
        <authorList>
            <person name="Okazaki N."/>
            <person name="Kikuno R."/>
            <person name="Ohara R."/>
            <person name="Inamoto S."/>
            <person name="Koseki H."/>
            <person name="Hiraoka S."/>
            <person name="Saga Y."/>
            <person name="Seino S."/>
            <person name="Nishimura M."/>
            <person name="Kaisho T."/>
            <person name="Hoshino K."/>
            <person name="Kitamura H."/>
            <person name="Nagase T."/>
            <person name="Ohara O."/>
            <person name="Koga H."/>
        </authorList>
    </citation>
    <scope>NUCLEOTIDE SEQUENCE [LARGE SCALE MRNA] OF 4-1079 (ISOFORM 3)</scope>
    <source>
        <tissue>Pancreatic islet</tissue>
    </source>
</reference>
<reference key="4">
    <citation type="journal article" date="2010" name="Cell">
        <title>A tissue-specific atlas of mouse protein phosphorylation and expression.</title>
        <authorList>
            <person name="Huttlin E.L."/>
            <person name="Jedrychowski M.P."/>
            <person name="Elias J.E."/>
            <person name="Goswami T."/>
            <person name="Rad R."/>
            <person name="Beausoleil S.A."/>
            <person name="Villen J."/>
            <person name="Haas W."/>
            <person name="Sowa M.E."/>
            <person name="Gygi S.P."/>
        </authorList>
    </citation>
    <scope>PHOSPHORYLATION [LARGE SCALE ANALYSIS] AT SER-561</scope>
    <scope>IDENTIFICATION BY MASS SPECTROMETRY [LARGE SCALE ANALYSIS]</scope>
    <source>
        <tissue>Brain</tissue>
        <tissue>Kidney</tissue>
        <tissue>Liver</tissue>
        <tissue>Lung</tissue>
        <tissue>Pancreas</tissue>
        <tissue>Spleen</tissue>
        <tissue>Testis</tissue>
    </source>
</reference>
<proteinExistence type="evidence at protein level"/>
<feature type="chain" id="PRO_0000305060" description="Transport and Golgi organization protein 6 homolog">
    <location>
        <begin position="1"/>
        <end position="1079"/>
    </location>
</feature>
<feature type="transmembrane region" description="Helical" evidence="1">
    <location>
        <begin position="473"/>
        <end position="493"/>
    </location>
</feature>
<feature type="repeat" description="HEAT 1">
    <location>
        <begin position="864"/>
        <end position="902"/>
    </location>
</feature>
<feature type="repeat" description="HEAT 2">
    <location>
        <begin position="937"/>
        <end position="973"/>
    </location>
</feature>
<feature type="region of interest" description="Disordered" evidence="2">
    <location>
        <begin position="767"/>
        <end position="818"/>
    </location>
</feature>
<feature type="compositionally biased region" description="Polar residues" evidence="2">
    <location>
        <begin position="785"/>
        <end position="794"/>
    </location>
</feature>
<feature type="compositionally biased region" description="Polar residues" evidence="2">
    <location>
        <begin position="802"/>
        <end position="818"/>
    </location>
</feature>
<feature type="modified residue" description="Phosphoserine" evidence="6">
    <location>
        <position position="561"/>
    </location>
</feature>
<feature type="splice variant" id="VSP_028206" description="In isoform 3." evidence="3">
    <location>
        <begin position="886"/>
        <end position="891"/>
    </location>
</feature>
<feature type="splice variant" id="VSP_028207" description="In isoform 2." evidence="4">
    <original>IALLSDVYPEEILVDLLAKYDSGKDKHTP</original>
    <variation>KLTWTKMISCSLRGTATRHNWLFVHLSAP</variation>
    <location>
        <begin position="887"/>
        <end position="915"/>
    </location>
</feature>
<feature type="splice variant" id="VSP_028208" description="In isoform 2." evidence="4">
    <location>
        <begin position="916"/>
        <end position="1079"/>
    </location>
</feature>
<feature type="sequence conflict" description="In Ref. 2; AAH66869/AAH69838." evidence="5" ref="2">
    <original>L</original>
    <variation>P</variation>
    <location>
        <position position="568"/>
    </location>
</feature>
<feature type="sequence conflict" description="In Ref. 2; AAH66869/AAH69838." evidence="5" ref="2">
    <original>P</original>
    <variation>L</variation>
    <location>
        <position position="1067"/>
    </location>
</feature>
<comment type="subcellular location">
    <subcellularLocation>
        <location evidence="5">Membrane</location>
        <topology evidence="5">Single-pass membrane protein</topology>
    </subcellularLocation>
</comment>
<comment type="alternative products">
    <event type="alternative splicing"/>
    <isoform>
        <id>Q8C3S2-1</id>
        <name>1</name>
        <sequence type="displayed"/>
    </isoform>
    <isoform>
        <id>Q8C3S2-2</id>
        <name>2</name>
        <sequence type="described" ref="VSP_028207 VSP_028208"/>
    </isoform>
    <isoform>
        <id>Q8C3S2-3</id>
        <name>3</name>
        <sequence type="described" ref="VSP_028206"/>
    </isoform>
</comment>
<comment type="similarity">
    <text evidence="5">Belongs to the Tango6 family.</text>
</comment>
<protein>
    <recommendedName>
        <fullName>Transport and Golgi organization protein 6 homolog</fullName>
    </recommendedName>
    <alternativeName>
        <fullName>Transmembrane and coiled-coil domain-containing protein 7</fullName>
    </alternativeName>
</protein>
<accession>Q8C3S2</accession>
<accession>Q69ZB6</accession>
<accession>Q6NXV4</accession>
<accession>Q8C6M0</accession>
<accession>Q8C8G2</accession>
<keyword id="KW-0025">Alternative splicing</keyword>
<keyword id="KW-0472">Membrane</keyword>
<keyword id="KW-0597">Phosphoprotein</keyword>
<keyword id="KW-1185">Reference proteome</keyword>
<keyword id="KW-0677">Repeat</keyword>
<keyword id="KW-0812">Transmembrane</keyword>
<keyword id="KW-1133">Transmembrane helix</keyword>
<name>TNG6_MOUSE</name>
<gene>
    <name type="primary">Tango6</name>
    <name type="synonym">Kiaa1746</name>
    <name type="synonym">Tmco7</name>
</gene>